<evidence type="ECO:0000250" key="1"/>
<evidence type="ECO:0000250" key="2">
    <source>
        <dbReference type="UniProtKB" id="P00157"/>
    </source>
</evidence>
<evidence type="ECO:0000255" key="3">
    <source>
        <dbReference type="PROSITE-ProRule" id="PRU00967"/>
    </source>
</evidence>
<evidence type="ECO:0000255" key="4">
    <source>
        <dbReference type="PROSITE-ProRule" id="PRU00968"/>
    </source>
</evidence>
<geneLocation type="mitochondrion"/>
<sequence>MTNLRKTHPLMKIVNSSFIDLPAPSNISSWWNFGSLLGVCLIIQILTGLFLAMHYTSDTMTAFSSVTHICRDVNYGWLIRYLHANGASMFFICLFLHVGRGLYYGSYMYLETWNIGVLLLFAVMATAFMGYVLPWGQMSFWGATVITNLLSAIPYIGSDLVEWIWGGFSVDKATLTRFFAFHFILPFIIAALAGVHLLFLHETGSNNPSGLCSDADKIPFHPYYTIKDILGVLLLILVLMSLVLFSPDLLGDPDNYTPANPLNTPPHIKPEWYFLFAYAILRSIPNKLGGVLALALSILILAVVPFLHTSKQRSMMFRPFSQCLFWILVADLLTLTWIGGQPVEHPFIIIGQLASILYFLLILVLMPITSLFENNLLKW</sequence>
<comment type="function">
    <text evidence="2">Component of the ubiquinol-cytochrome c reductase complex (complex III or cytochrome b-c1 complex) that is part of the mitochondrial respiratory chain. The b-c1 complex mediates electron transfer from ubiquinol to cytochrome c. Contributes to the generation of a proton gradient across the mitochondrial membrane that is then used for ATP synthesis.</text>
</comment>
<comment type="cofactor">
    <cofactor evidence="2">
        <name>heme b</name>
        <dbReference type="ChEBI" id="CHEBI:60344"/>
    </cofactor>
    <text evidence="2">Binds 2 heme b groups non-covalently.</text>
</comment>
<comment type="subunit">
    <text evidence="2">The cytochrome bc1 complex contains 11 subunits: 3 respiratory subunits (MT-CYB, CYC1 and UQCRFS1), 2 core proteins (UQCRC1 and UQCRC2) and 6 low-molecular weight proteins (UQCRH/QCR6, UQCRB/QCR7, UQCRQ/QCR8, UQCR10/QCR9, UQCR11/QCR10 and a cleavage product of UQCRFS1). This cytochrome bc1 complex then forms a dimer.</text>
</comment>
<comment type="subcellular location">
    <subcellularLocation>
        <location evidence="2">Mitochondrion inner membrane</location>
        <topology evidence="2">Multi-pass membrane protein</topology>
    </subcellularLocation>
</comment>
<comment type="miscellaneous">
    <text evidence="1">Heme 1 (or BL or b562) is low-potential and absorbs at about 562 nm, and heme 2 (or BH or b566) is high-potential and absorbs at about 566 nm.</text>
</comment>
<comment type="similarity">
    <text evidence="3 4">Belongs to the cytochrome b family.</text>
</comment>
<comment type="caution">
    <text evidence="2">The full-length protein contains only eight transmembrane helices, not nine as predicted by bioinformatics tools.</text>
</comment>
<gene>
    <name type="primary">MT-CYB</name>
    <name type="synonym">COB</name>
    <name type="synonym">CYTB</name>
    <name type="synonym">MTCYB</name>
</gene>
<keyword id="KW-0249">Electron transport</keyword>
<keyword id="KW-0349">Heme</keyword>
<keyword id="KW-0408">Iron</keyword>
<keyword id="KW-0472">Membrane</keyword>
<keyword id="KW-0479">Metal-binding</keyword>
<keyword id="KW-0496">Mitochondrion</keyword>
<keyword id="KW-0999">Mitochondrion inner membrane</keyword>
<keyword id="KW-0679">Respiratory chain</keyword>
<keyword id="KW-0812">Transmembrane</keyword>
<keyword id="KW-1133">Transmembrane helix</keyword>
<keyword id="KW-0813">Transport</keyword>
<keyword id="KW-0830">Ubiquinone</keyword>
<organism>
    <name type="scientific">Sorex caecutiens</name>
    <name type="common">Laxmann's shrew</name>
    <dbReference type="NCBI Taxonomy" id="62276"/>
    <lineage>
        <taxon>Eukaryota</taxon>
        <taxon>Metazoa</taxon>
        <taxon>Chordata</taxon>
        <taxon>Craniata</taxon>
        <taxon>Vertebrata</taxon>
        <taxon>Euteleostomi</taxon>
        <taxon>Mammalia</taxon>
        <taxon>Eutheria</taxon>
        <taxon>Laurasiatheria</taxon>
        <taxon>Eulipotyphla</taxon>
        <taxon>Soricidae</taxon>
        <taxon>Soricinae</taxon>
        <taxon>Sorex</taxon>
    </lineage>
</organism>
<dbReference type="EMBL" id="D85347">
    <property type="protein sequence ID" value="BAA21340.1"/>
    <property type="molecule type" value="Genomic_DNA"/>
</dbReference>
<dbReference type="EMBL" id="D85349">
    <property type="protein sequence ID" value="BAA21342.1"/>
    <property type="molecule type" value="Genomic_DNA"/>
</dbReference>
<dbReference type="EMBL" id="D85360">
    <property type="protein sequence ID" value="BAA21353.1"/>
    <property type="molecule type" value="Genomic_DNA"/>
</dbReference>
<dbReference type="EMBL" id="D85367">
    <property type="protein sequence ID" value="BAA21360.1"/>
    <property type="molecule type" value="Genomic_DNA"/>
</dbReference>
<dbReference type="EMBL" id="AJ000433">
    <property type="protein sequence ID" value="CAA04077.1"/>
    <property type="molecule type" value="Genomic_DNA"/>
</dbReference>
<dbReference type="SMR" id="O79450"/>
<dbReference type="GO" id="GO:0005743">
    <property type="term" value="C:mitochondrial inner membrane"/>
    <property type="evidence" value="ECO:0007669"/>
    <property type="project" value="UniProtKB-SubCell"/>
</dbReference>
<dbReference type="GO" id="GO:0045275">
    <property type="term" value="C:respiratory chain complex III"/>
    <property type="evidence" value="ECO:0007669"/>
    <property type="project" value="InterPro"/>
</dbReference>
<dbReference type="GO" id="GO:0046872">
    <property type="term" value="F:metal ion binding"/>
    <property type="evidence" value="ECO:0007669"/>
    <property type="project" value="UniProtKB-KW"/>
</dbReference>
<dbReference type="GO" id="GO:0008121">
    <property type="term" value="F:ubiquinol-cytochrome-c reductase activity"/>
    <property type="evidence" value="ECO:0007669"/>
    <property type="project" value="InterPro"/>
</dbReference>
<dbReference type="GO" id="GO:0006122">
    <property type="term" value="P:mitochondrial electron transport, ubiquinol to cytochrome c"/>
    <property type="evidence" value="ECO:0007669"/>
    <property type="project" value="TreeGrafter"/>
</dbReference>
<dbReference type="CDD" id="cd00290">
    <property type="entry name" value="cytochrome_b_C"/>
    <property type="match status" value="1"/>
</dbReference>
<dbReference type="CDD" id="cd00284">
    <property type="entry name" value="Cytochrome_b_N"/>
    <property type="match status" value="1"/>
</dbReference>
<dbReference type="FunFam" id="1.20.810.10:FF:000002">
    <property type="entry name" value="Cytochrome b"/>
    <property type="match status" value="1"/>
</dbReference>
<dbReference type="Gene3D" id="1.20.810.10">
    <property type="entry name" value="Cytochrome Bc1 Complex, Chain C"/>
    <property type="match status" value="1"/>
</dbReference>
<dbReference type="InterPro" id="IPR005798">
    <property type="entry name" value="Cyt_b/b6_C"/>
</dbReference>
<dbReference type="InterPro" id="IPR036150">
    <property type="entry name" value="Cyt_b/b6_C_sf"/>
</dbReference>
<dbReference type="InterPro" id="IPR005797">
    <property type="entry name" value="Cyt_b/b6_N"/>
</dbReference>
<dbReference type="InterPro" id="IPR027387">
    <property type="entry name" value="Cytb/b6-like_sf"/>
</dbReference>
<dbReference type="InterPro" id="IPR030689">
    <property type="entry name" value="Cytochrome_b"/>
</dbReference>
<dbReference type="InterPro" id="IPR048260">
    <property type="entry name" value="Cytochrome_b_C_euk/bac"/>
</dbReference>
<dbReference type="InterPro" id="IPR048259">
    <property type="entry name" value="Cytochrome_b_N_euk/bac"/>
</dbReference>
<dbReference type="InterPro" id="IPR016174">
    <property type="entry name" value="Di-haem_cyt_TM"/>
</dbReference>
<dbReference type="PANTHER" id="PTHR19271">
    <property type="entry name" value="CYTOCHROME B"/>
    <property type="match status" value="1"/>
</dbReference>
<dbReference type="PANTHER" id="PTHR19271:SF16">
    <property type="entry name" value="CYTOCHROME B"/>
    <property type="match status" value="1"/>
</dbReference>
<dbReference type="Pfam" id="PF00032">
    <property type="entry name" value="Cytochrom_B_C"/>
    <property type="match status" value="1"/>
</dbReference>
<dbReference type="Pfam" id="PF00033">
    <property type="entry name" value="Cytochrome_B"/>
    <property type="match status" value="1"/>
</dbReference>
<dbReference type="PIRSF" id="PIRSF038885">
    <property type="entry name" value="COB"/>
    <property type="match status" value="1"/>
</dbReference>
<dbReference type="SUPFAM" id="SSF81648">
    <property type="entry name" value="a domain/subunit of cytochrome bc1 complex (Ubiquinol-cytochrome c reductase)"/>
    <property type="match status" value="1"/>
</dbReference>
<dbReference type="SUPFAM" id="SSF81342">
    <property type="entry name" value="Transmembrane di-heme cytochromes"/>
    <property type="match status" value="1"/>
</dbReference>
<dbReference type="PROSITE" id="PS51003">
    <property type="entry name" value="CYTB_CTER"/>
    <property type="match status" value="1"/>
</dbReference>
<dbReference type="PROSITE" id="PS51002">
    <property type="entry name" value="CYTB_NTER"/>
    <property type="match status" value="1"/>
</dbReference>
<accession>O79450</accession>
<accession>O21737</accession>
<feature type="chain" id="PRO_0000061552" description="Cytochrome b">
    <location>
        <begin position="1"/>
        <end position="379"/>
    </location>
</feature>
<feature type="transmembrane region" description="Helical" evidence="2">
    <location>
        <begin position="33"/>
        <end position="53"/>
    </location>
</feature>
<feature type="transmembrane region" description="Helical" evidence="2">
    <location>
        <begin position="77"/>
        <end position="98"/>
    </location>
</feature>
<feature type="transmembrane region" description="Helical" evidence="2">
    <location>
        <begin position="113"/>
        <end position="133"/>
    </location>
</feature>
<feature type="transmembrane region" description="Helical" evidence="2">
    <location>
        <begin position="178"/>
        <end position="198"/>
    </location>
</feature>
<feature type="transmembrane region" description="Helical" evidence="2">
    <location>
        <begin position="226"/>
        <end position="246"/>
    </location>
</feature>
<feature type="transmembrane region" description="Helical" evidence="2">
    <location>
        <begin position="288"/>
        <end position="308"/>
    </location>
</feature>
<feature type="transmembrane region" description="Helical" evidence="2">
    <location>
        <begin position="320"/>
        <end position="340"/>
    </location>
</feature>
<feature type="transmembrane region" description="Helical" evidence="2">
    <location>
        <begin position="347"/>
        <end position="367"/>
    </location>
</feature>
<feature type="binding site" description="axial binding residue" evidence="2">
    <location>
        <position position="83"/>
    </location>
    <ligand>
        <name>heme b</name>
        <dbReference type="ChEBI" id="CHEBI:60344"/>
        <label>b562</label>
    </ligand>
    <ligandPart>
        <name>Fe</name>
        <dbReference type="ChEBI" id="CHEBI:18248"/>
    </ligandPart>
</feature>
<feature type="binding site" description="axial binding residue" evidence="2">
    <location>
        <position position="97"/>
    </location>
    <ligand>
        <name>heme b</name>
        <dbReference type="ChEBI" id="CHEBI:60344"/>
        <label>b566</label>
    </ligand>
    <ligandPart>
        <name>Fe</name>
        <dbReference type="ChEBI" id="CHEBI:18248"/>
    </ligandPart>
</feature>
<feature type="binding site" description="axial binding residue" evidence="2">
    <location>
        <position position="182"/>
    </location>
    <ligand>
        <name>heme b</name>
        <dbReference type="ChEBI" id="CHEBI:60344"/>
        <label>b562</label>
    </ligand>
    <ligandPart>
        <name>Fe</name>
        <dbReference type="ChEBI" id="CHEBI:18248"/>
    </ligandPart>
</feature>
<feature type="binding site" description="axial binding residue" evidence="2">
    <location>
        <position position="196"/>
    </location>
    <ligand>
        <name>heme b</name>
        <dbReference type="ChEBI" id="CHEBI:60344"/>
        <label>b566</label>
    </ligand>
    <ligandPart>
        <name>Fe</name>
        <dbReference type="ChEBI" id="CHEBI:18248"/>
    </ligandPart>
</feature>
<feature type="binding site" evidence="2">
    <location>
        <position position="201"/>
    </location>
    <ligand>
        <name>a ubiquinone</name>
        <dbReference type="ChEBI" id="CHEBI:16389"/>
    </ligand>
</feature>
<proteinExistence type="inferred from homology"/>
<protein>
    <recommendedName>
        <fullName>Cytochrome b</fullName>
    </recommendedName>
    <alternativeName>
        <fullName>Complex III subunit 3</fullName>
    </alternativeName>
    <alternativeName>
        <fullName>Complex III subunit III</fullName>
    </alternativeName>
    <alternativeName>
        <fullName>Cytochrome b-c1 complex subunit 3</fullName>
    </alternativeName>
    <alternativeName>
        <fullName>Ubiquinol-cytochrome-c reductase complex cytochrome b subunit</fullName>
    </alternativeName>
</protein>
<name>CYB_SORCA</name>
<reference key="1">
    <citation type="journal article" date="1997" name="Zool. Sci.">
        <title>Molecular phylogeny from nucleotide sequences of the mitochondrial cytochrome b gene and evolutionary history of Eurasian soricine shrews (Mammalia, Insectivora).</title>
        <authorList>
            <person name="Ohdachi S."/>
            <person name="Masuda R."/>
            <person name="Abe H."/>
            <person name="Adachi J."/>
            <person name="Dokuchaev N.E."/>
            <person name="Haukisalmi V."/>
            <person name="Yoshida M.C."/>
        </authorList>
    </citation>
    <scope>NUCLEOTIDE SEQUENCE [GENOMIC DNA] OF 1-134</scope>
    <source>
        <strain>Isolate #365</strain>
        <strain>Isolate 94SAK4</strain>
        <strain>Isolate 94SC1</strain>
        <strain>Isolate N26/95</strain>
        <tissue>Liver</tissue>
        <tissue>Muscle</tissue>
    </source>
</reference>
<reference key="2">
    <citation type="journal article" date="1999" name="Mol. Phylogenet. Evol.">
        <title>Molecular phylogeny and evolution of Sorex shrews (Soricidae: Insectivora) inferred from mitochondrial DNA sequence data.</title>
        <authorList>
            <person name="Fumagalli L."/>
            <person name="Taberlet P."/>
            <person name="Stewart D.T."/>
            <person name="Gielly L."/>
            <person name="Hausser J."/>
            <person name="Vogel P."/>
        </authorList>
    </citation>
    <scope>NUCLEOTIDE SEQUENCE [GENOMIC DNA] OF 44-379</scope>
</reference>